<comment type="function">
    <text evidence="2 3 4 5 8">NADP-dependent 17-alpha-hydroxysteroid dehydrogenase that converts 5-alpha-androstane-3,17-dione into androsterone. Has lower 3-alpha-hydroxysteroid dehydrogenase activity. Has broad substrate specificity and acts on various 17-alpha-hydroxysteroids, 17-ketosteroids, 3-alpha hydroxysteroids and 3-ketosteroids. Reduction of keto groups is strictly stereoselective. Reduction of 17-ketosteroids yields only 17-alpha-hydroxysteroids. Likewise, reduction of 3-ketosteroids yields only 3-alpha-hydroxysteroids.</text>
</comment>
<comment type="catalytic activity">
    <reaction evidence="2 5 8">
        <text>androsterone + NADP(+) = 5alpha-androstan-3,17-dione + NADPH + H(+)</text>
        <dbReference type="Rhea" id="RHEA:20377"/>
        <dbReference type="ChEBI" id="CHEBI:15378"/>
        <dbReference type="ChEBI" id="CHEBI:15994"/>
        <dbReference type="ChEBI" id="CHEBI:16032"/>
        <dbReference type="ChEBI" id="CHEBI:57783"/>
        <dbReference type="ChEBI" id="CHEBI:58349"/>
        <dbReference type="EC" id="1.1.1.209"/>
    </reaction>
</comment>
<comment type="catalytic activity">
    <reaction evidence="2 5 8">
        <text>androsterone + NAD(+) = 5alpha-androstan-3,17-dione + NADH + H(+)</text>
        <dbReference type="Rhea" id="RHEA:20381"/>
        <dbReference type="ChEBI" id="CHEBI:15378"/>
        <dbReference type="ChEBI" id="CHEBI:15994"/>
        <dbReference type="ChEBI" id="CHEBI:16032"/>
        <dbReference type="ChEBI" id="CHEBI:57540"/>
        <dbReference type="ChEBI" id="CHEBI:57945"/>
        <dbReference type="EC" id="1.1.1.209"/>
    </reaction>
</comment>
<comment type="activity regulation">
    <text evidence="2">Inhibited by high concentrations of substrate.</text>
</comment>
<comment type="biophysicochemical properties">
    <kinetics>
        <KM evidence="2 5">1.8 uM for NADP</KM>
        <KM evidence="2 5">19 uM for androstenedione</KM>
        <KM evidence="2 5">0.5 uM for 5-beta-pregnane-3-alpha,20-alpha-diol</KM>
        <KM evidence="2 5">0.5 uM for 5-beta-pregnane-3,20-dione</KM>
        <KM evidence="2 5">0.6 uM for epitestosterone</KM>
        <KM evidence="2 5">0.3 uM for androst-4-ene-3,17-dione</KM>
    </kinetics>
    <phDependence>
        <text evidence="2 5">Optimum pH is 10.0.</text>
    </phDependence>
</comment>
<comment type="subunit">
    <text evidence="2 4 5 6 7">Monomer.</text>
</comment>
<comment type="subcellular location">
    <subcellularLocation>
        <location evidence="1">Cytoplasm</location>
    </subcellularLocation>
</comment>
<comment type="tissue specificity">
    <text evidence="2 3">Detected in kidney and brain.</text>
</comment>
<comment type="similarity">
    <text evidence="9">Belongs to the aldo/keto reductase family.</text>
</comment>
<feature type="chain" id="PRO_0000326222" description="Aldo-keto reductase family 1 member C21">
    <location>
        <begin position="1"/>
        <end position="323"/>
    </location>
</feature>
<feature type="active site" description="Proton donor">
    <location>
        <position position="55"/>
    </location>
</feature>
<feature type="binding site" evidence="4 6 7">
    <location>
        <begin position="20"/>
        <end position="24"/>
    </location>
    <ligand>
        <name>NADP(+)</name>
        <dbReference type="ChEBI" id="CHEBI:58349"/>
    </ligand>
</feature>
<feature type="binding site">
    <location>
        <position position="31"/>
    </location>
    <ligand>
        <name>substrate</name>
    </ligand>
</feature>
<feature type="binding site" evidence="4 6 7">
    <location>
        <position position="50"/>
    </location>
    <ligand>
        <name>NADP(+)</name>
        <dbReference type="ChEBI" id="CHEBI:58349"/>
    </ligand>
</feature>
<feature type="binding site">
    <location>
        <position position="117"/>
    </location>
    <ligand>
        <name>substrate</name>
    </ligand>
</feature>
<feature type="binding site" evidence="4 6 7">
    <location>
        <begin position="166"/>
        <end position="167"/>
    </location>
    <ligand>
        <name>NADP(+)</name>
        <dbReference type="ChEBI" id="CHEBI:58349"/>
    </ligand>
</feature>
<feature type="binding site" evidence="4 6 7">
    <location>
        <position position="190"/>
    </location>
    <ligand>
        <name>NADP(+)</name>
        <dbReference type="ChEBI" id="CHEBI:58349"/>
    </ligand>
</feature>
<feature type="binding site" evidence="4 6 7">
    <location>
        <begin position="216"/>
        <end position="224"/>
    </location>
    <ligand>
        <name>NADP(+)</name>
        <dbReference type="ChEBI" id="CHEBI:58349"/>
    </ligand>
</feature>
<feature type="binding site" evidence="4 6 7">
    <location>
        <begin position="270"/>
        <end position="280"/>
    </location>
    <ligand>
        <name>NADP(+)</name>
        <dbReference type="ChEBI" id="CHEBI:58349"/>
    </ligand>
</feature>
<feature type="site" description="Lowers pKa of active site Tyr" evidence="1">
    <location>
        <position position="84"/>
    </location>
</feature>
<feature type="mutagenesis site" description="Reduces enzyme activity and affinity for substrate. Alters the stereospecificity, so that androstenedione is converted to testosterone." evidence="4">
    <original>A</original>
    <variation>Y</variation>
    <location>
        <position position="24"/>
    </location>
</feature>
<feature type="mutagenesis site" description="No effect on affinity for androstenedione. Slight increase of catalytic activity." evidence="5">
    <original>K</original>
    <variation>A</variation>
    <location>
        <position position="31"/>
    </location>
</feature>
<feature type="mutagenesis site" description="Decreases affinity for NADP. Changes enzyme activity, leading to the production of testosterone and concomitantly reducing the production of epi-testosterone." evidence="8">
    <original>Q</original>
    <variation>N</variation>
    <location>
        <position position="222"/>
    </location>
</feature>
<feature type="mutagenesis site" description="Decreases affinity for NADP. Changes enzyme activity, leading to the production of testosterone and concomitantly reducing the production of epi-testosterone." evidence="8">
    <original>Y</original>
    <variation>D</variation>
    <location>
        <position position="224"/>
    </location>
</feature>
<feature type="mutagenesis site" description="No effect on enzyme activity. Decreases affinity for NADP." evidence="8">
    <original>Y</original>
    <variation>F</variation>
    <location>
        <position position="224"/>
    </location>
</feature>
<feature type="sequence conflict" description="In Ref. 1; BAD18929 and 4; AAH13531/AAH91761." evidence="9" ref="1 4">
    <original>L</original>
    <variation>V</variation>
    <location>
        <position position="27"/>
    </location>
</feature>
<feature type="sequence conflict" description="In Ref. 1; BAD18929 and 4; AAH13531/AAH91761." evidence="9" ref="1 4">
    <original>H</original>
    <variation>R</variation>
    <location>
        <position position="60"/>
    </location>
</feature>
<feature type="sequence conflict" description="In Ref. 1; BAD18929 and 4; AAH13531/AAH91761." evidence="9" ref="1 4">
    <original>H</original>
    <variation>R</variation>
    <location>
        <position position="91"/>
    </location>
</feature>
<feature type="sequence conflict" description="In Ref. 1; BAD18929 and 4; AAH13531/AAH91761." evidence="9" ref="1 4">
    <original>E</original>
    <variation>V</variation>
    <location>
        <position position="100"/>
    </location>
</feature>
<feature type="sequence conflict" description="In Ref. 1; BAD18929 and 4; AAH13531/AAH91761." evidence="9" ref="1 4">
    <original>Y</original>
    <variation>S</variation>
    <location>
        <position position="170"/>
    </location>
</feature>
<feature type="sequence conflict" description="In Ref. 4; AAH61057." evidence="9" ref="4">
    <original>K</original>
    <variation>E</variation>
    <location>
        <position position="294"/>
    </location>
</feature>
<feature type="strand" evidence="11">
    <location>
        <begin position="7"/>
        <end position="9"/>
    </location>
</feature>
<feature type="strand" evidence="11">
    <location>
        <begin position="15"/>
        <end position="22"/>
    </location>
</feature>
<feature type="strand" evidence="10">
    <location>
        <begin position="27"/>
        <end position="29"/>
    </location>
</feature>
<feature type="helix" evidence="11">
    <location>
        <begin position="33"/>
        <end position="44"/>
    </location>
</feature>
<feature type="strand" evidence="11">
    <location>
        <begin position="48"/>
        <end position="50"/>
    </location>
</feature>
<feature type="helix" evidence="11">
    <location>
        <begin position="53"/>
        <end position="55"/>
    </location>
</feature>
<feature type="helix" evidence="11">
    <location>
        <begin position="58"/>
        <end position="70"/>
    </location>
</feature>
<feature type="helix" evidence="11">
    <location>
        <begin position="76"/>
        <end position="78"/>
    </location>
</feature>
<feature type="strand" evidence="11">
    <location>
        <begin position="80"/>
        <end position="85"/>
    </location>
</feature>
<feature type="helix" evidence="11">
    <location>
        <begin position="87"/>
        <end position="89"/>
    </location>
</feature>
<feature type="turn" evidence="11">
    <location>
        <begin position="92"/>
        <end position="94"/>
    </location>
</feature>
<feature type="helix" evidence="11">
    <location>
        <begin position="95"/>
        <end position="106"/>
    </location>
</feature>
<feature type="strand" evidence="11">
    <location>
        <begin position="111"/>
        <end position="117"/>
    </location>
</feature>
<feature type="strand" evidence="14">
    <location>
        <begin position="121"/>
        <end position="123"/>
    </location>
</feature>
<feature type="strand" evidence="14">
    <location>
        <begin position="125"/>
        <end position="129"/>
    </location>
</feature>
<feature type="helix" evidence="11">
    <location>
        <begin position="144"/>
        <end position="156"/>
    </location>
</feature>
<feature type="strand" evidence="11">
    <location>
        <begin position="159"/>
        <end position="167"/>
    </location>
</feature>
<feature type="helix" evidence="11">
    <location>
        <begin position="170"/>
        <end position="177"/>
    </location>
</feature>
<feature type="strand" evidence="11">
    <location>
        <begin position="187"/>
        <end position="192"/>
    </location>
</feature>
<feature type="strand" evidence="13">
    <location>
        <begin position="194"/>
        <end position="197"/>
    </location>
</feature>
<feature type="helix" evidence="11">
    <location>
        <begin position="200"/>
        <end position="208"/>
    </location>
</feature>
<feature type="strand" evidence="11">
    <location>
        <begin position="212"/>
        <end position="216"/>
    </location>
</feature>
<feature type="turn" evidence="11">
    <location>
        <begin position="225"/>
        <end position="227"/>
    </location>
</feature>
<feature type="helix" evidence="14">
    <location>
        <begin position="228"/>
        <end position="231"/>
    </location>
</feature>
<feature type="helix" evidence="11">
    <location>
        <begin position="235"/>
        <end position="237"/>
    </location>
</feature>
<feature type="helix" evidence="11">
    <location>
        <begin position="239"/>
        <end position="248"/>
    </location>
</feature>
<feature type="helix" evidence="11">
    <location>
        <begin position="252"/>
        <end position="261"/>
    </location>
</feature>
<feature type="turn" evidence="11">
    <location>
        <begin position="262"/>
        <end position="264"/>
    </location>
</feature>
<feature type="strand" evidence="11">
    <location>
        <begin position="266"/>
        <end position="269"/>
    </location>
</feature>
<feature type="helix" evidence="11">
    <location>
        <begin position="274"/>
        <end position="280"/>
    </location>
</feature>
<feature type="helix" evidence="11">
    <location>
        <begin position="281"/>
        <end position="285"/>
    </location>
</feature>
<feature type="helix" evidence="11">
    <location>
        <begin position="290"/>
        <end position="297"/>
    </location>
</feature>
<feature type="helix" evidence="11">
    <location>
        <begin position="309"/>
        <end position="311"/>
    </location>
</feature>
<feature type="strand" evidence="12">
    <location>
        <begin position="318"/>
        <end position="321"/>
    </location>
</feature>
<reference key="1">
    <citation type="journal article" date="2004" name="Biol. Pharm. Bull.">
        <title>Characterization of two isoforms of mouse 3(17)alpha-hydroxysteroid dehydrogenases of the aldo-keto reductase family.</title>
        <authorList>
            <person name="Ishikura S."/>
            <person name="Usami N."/>
            <person name="Nakajima S."/>
            <person name="Shiraishi H."/>
            <person name="El-Kabbani O."/>
            <person name="Hara A."/>
        </authorList>
    </citation>
    <scope>NUCLEOTIDE SEQUENCE [MRNA]</scope>
    <scope>CATALYTIC ACTIVITY</scope>
    <scope>FUNCTION</scope>
    <scope>SUBUNIT</scope>
    <scope>ACTIVITY REGULATION</scope>
    <scope>BIOPHYSICOCHEMICAL PROPERTIES</scope>
    <scope>TISSUE SPECIFICITY</scope>
    <source>
        <strain>ICR</strain>
        <tissue>Kidney</tissue>
    </source>
</reference>
<reference key="2">
    <citation type="journal article" date="2005" name="BMC Biochem.">
        <title>Characterization of 17alpha-hydroxysteroid dehydrogenase activity (17-alpha-HSD) and its involvement in the biosynthesis of epitestosterone.</title>
        <authorList>
            <person name="Bellemare V."/>
            <person name="Faucher F."/>
            <person name="Breton R."/>
            <person name="Luu-The V."/>
        </authorList>
    </citation>
    <scope>NUCLEOTIDE SEQUENCE [MRNA]</scope>
    <scope>FUNCTION</scope>
    <scope>TISSUE SPECIFICITY</scope>
    <source>
        <strain>C57BL/6J</strain>
    </source>
</reference>
<reference key="3">
    <citation type="journal article" date="2005" name="Science">
        <title>The transcriptional landscape of the mammalian genome.</title>
        <authorList>
            <person name="Carninci P."/>
            <person name="Kasukawa T."/>
            <person name="Katayama S."/>
            <person name="Gough J."/>
            <person name="Frith M.C."/>
            <person name="Maeda N."/>
            <person name="Oyama R."/>
            <person name="Ravasi T."/>
            <person name="Lenhard B."/>
            <person name="Wells C."/>
            <person name="Kodzius R."/>
            <person name="Shimokawa K."/>
            <person name="Bajic V.B."/>
            <person name="Brenner S.E."/>
            <person name="Batalov S."/>
            <person name="Forrest A.R."/>
            <person name="Zavolan M."/>
            <person name="Davis M.J."/>
            <person name="Wilming L.G."/>
            <person name="Aidinis V."/>
            <person name="Allen J.E."/>
            <person name="Ambesi-Impiombato A."/>
            <person name="Apweiler R."/>
            <person name="Aturaliya R.N."/>
            <person name="Bailey T.L."/>
            <person name="Bansal M."/>
            <person name="Baxter L."/>
            <person name="Beisel K.W."/>
            <person name="Bersano T."/>
            <person name="Bono H."/>
            <person name="Chalk A.M."/>
            <person name="Chiu K.P."/>
            <person name="Choudhary V."/>
            <person name="Christoffels A."/>
            <person name="Clutterbuck D.R."/>
            <person name="Crowe M.L."/>
            <person name="Dalla E."/>
            <person name="Dalrymple B.P."/>
            <person name="de Bono B."/>
            <person name="Della Gatta G."/>
            <person name="di Bernardo D."/>
            <person name="Down T."/>
            <person name="Engstrom P."/>
            <person name="Fagiolini M."/>
            <person name="Faulkner G."/>
            <person name="Fletcher C.F."/>
            <person name="Fukushima T."/>
            <person name="Furuno M."/>
            <person name="Futaki S."/>
            <person name="Gariboldi M."/>
            <person name="Georgii-Hemming P."/>
            <person name="Gingeras T.R."/>
            <person name="Gojobori T."/>
            <person name="Green R.E."/>
            <person name="Gustincich S."/>
            <person name="Harbers M."/>
            <person name="Hayashi Y."/>
            <person name="Hensch T.K."/>
            <person name="Hirokawa N."/>
            <person name="Hill D."/>
            <person name="Huminiecki L."/>
            <person name="Iacono M."/>
            <person name="Ikeo K."/>
            <person name="Iwama A."/>
            <person name="Ishikawa T."/>
            <person name="Jakt M."/>
            <person name="Kanapin A."/>
            <person name="Katoh M."/>
            <person name="Kawasawa Y."/>
            <person name="Kelso J."/>
            <person name="Kitamura H."/>
            <person name="Kitano H."/>
            <person name="Kollias G."/>
            <person name="Krishnan S.P."/>
            <person name="Kruger A."/>
            <person name="Kummerfeld S.K."/>
            <person name="Kurochkin I.V."/>
            <person name="Lareau L.F."/>
            <person name="Lazarevic D."/>
            <person name="Lipovich L."/>
            <person name="Liu J."/>
            <person name="Liuni S."/>
            <person name="McWilliam S."/>
            <person name="Madan Babu M."/>
            <person name="Madera M."/>
            <person name="Marchionni L."/>
            <person name="Matsuda H."/>
            <person name="Matsuzawa S."/>
            <person name="Miki H."/>
            <person name="Mignone F."/>
            <person name="Miyake S."/>
            <person name="Morris K."/>
            <person name="Mottagui-Tabar S."/>
            <person name="Mulder N."/>
            <person name="Nakano N."/>
            <person name="Nakauchi H."/>
            <person name="Ng P."/>
            <person name="Nilsson R."/>
            <person name="Nishiguchi S."/>
            <person name="Nishikawa S."/>
            <person name="Nori F."/>
            <person name="Ohara O."/>
            <person name="Okazaki Y."/>
            <person name="Orlando V."/>
            <person name="Pang K.C."/>
            <person name="Pavan W.J."/>
            <person name="Pavesi G."/>
            <person name="Pesole G."/>
            <person name="Petrovsky N."/>
            <person name="Piazza S."/>
            <person name="Reed J."/>
            <person name="Reid J.F."/>
            <person name="Ring B.Z."/>
            <person name="Ringwald M."/>
            <person name="Rost B."/>
            <person name="Ruan Y."/>
            <person name="Salzberg S.L."/>
            <person name="Sandelin A."/>
            <person name="Schneider C."/>
            <person name="Schoenbach C."/>
            <person name="Sekiguchi K."/>
            <person name="Semple C.A."/>
            <person name="Seno S."/>
            <person name="Sessa L."/>
            <person name="Sheng Y."/>
            <person name="Shibata Y."/>
            <person name="Shimada H."/>
            <person name="Shimada K."/>
            <person name="Silva D."/>
            <person name="Sinclair B."/>
            <person name="Sperling S."/>
            <person name="Stupka E."/>
            <person name="Sugiura K."/>
            <person name="Sultana R."/>
            <person name="Takenaka Y."/>
            <person name="Taki K."/>
            <person name="Tammoja K."/>
            <person name="Tan S.L."/>
            <person name="Tang S."/>
            <person name="Taylor M.S."/>
            <person name="Tegner J."/>
            <person name="Teichmann S.A."/>
            <person name="Ueda H.R."/>
            <person name="van Nimwegen E."/>
            <person name="Verardo R."/>
            <person name="Wei C.L."/>
            <person name="Yagi K."/>
            <person name="Yamanishi H."/>
            <person name="Zabarovsky E."/>
            <person name="Zhu S."/>
            <person name="Zimmer A."/>
            <person name="Hide W."/>
            <person name="Bult C."/>
            <person name="Grimmond S.M."/>
            <person name="Teasdale R.D."/>
            <person name="Liu E.T."/>
            <person name="Brusic V."/>
            <person name="Quackenbush J."/>
            <person name="Wahlestedt C."/>
            <person name="Mattick J.S."/>
            <person name="Hume D.A."/>
            <person name="Kai C."/>
            <person name="Sasaki D."/>
            <person name="Tomaru Y."/>
            <person name="Fukuda S."/>
            <person name="Kanamori-Katayama M."/>
            <person name="Suzuki M."/>
            <person name="Aoki J."/>
            <person name="Arakawa T."/>
            <person name="Iida J."/>
            <person name="Imamura K."/>
            <person name="Itoh M."/>
            <person name="Kato T."/>
            <person name="Kawaji H."/>
            <person name="Kawagashira N."/>
            <person name="Kawashima T."/>
            <person name="Kojima M."/>
            <person name="Kondo S."/>
            <person name="Konno H."/>
            <person name="Nakano K."/>
            <person name="Ninomiya N."/>
            <person name="Nishio T."/>
            <person name="Okada M."/>
            <person name="Plessy C."/>
            <person name="Shibata K."/>
            <person name="Shiraki T."/>
            <person name="Suzuki S."/>
            <person name="Tagami M."/>
            <person name="Waki K."/>
            <person name="Watahiki A."/>
            <person name="Okamura-Oho Y."/>
            <person name="Suzuki H."/>
            <person name="Kawai J."/>
            <person name="Hayashizaki Y."/>
        </authorList>
    </citation>
    <scope>NUCLEOTIDE SEQUENCE [LARGE SCALE MRNA]</scope>
    <source>
        <strain>C57BL/6J</strain>
        <tissue>Embryo</tissue>
    </source>
</reference>
<reference key="4">
    <citation type="journal article" date="2004" name="Genome Res.">
        <title>The status, quality, and expansion of the NIH full-length cDNA project: the Mammalian Gene Collection (MGC).</title>
        <authorList>
            <consortium name="The MGC Project Team"/>
        </authorList>
    </citation>
    <scope>NUCLEOTIDE SEQUENCE [LARGE SCALE MRNA]</scope>
    <source>
        <strain>FVB/N</strain>
        <tissue>Kidney</tissue>
    </source>
</reference>
<reference key="5">
    <citation type="journal article" date="2010" name="Cell">
        <title>A tissue-specific atlas of mouse protein phosphorylation and expression.</title>
        <authorList>
            <person name="Huttlin E.L."/>
            <person name="Jedrychowski M.P."/>
            <person name="Elias J.E."/>
            <person name="Goswami T."/>
            <person name="Rad R."/>
            <person name="Beausoleil S.A."/>
            <person name="Villen J."/>
            <person name="Haas W."/>
            <person name="Sowa M.E."/>
            <person name="Gygi S.P."/>
        </authorList>
    </citation>
    <scope>IDENTIFICATION BY MASS SPECTROMETRY [LARGE SCALE ANALYSIS]</scope>
    <source>
        <tissue>Kidney</tissue>
    </source>
</reference>
<reference key="6">
    <citation type="journal article" date="2006" name="J. Mol. Biol.">
        <title>Crystal structures of mouse 17alpha-hydroxysteroid dehydrogenase (apoenzyme and enzyme-NADP(H) binary complex): identification of molecular determinants responsible for the unique 17alpha-reductive activity of this enzyme.</title>
        <authorList>
            <person name="Faucher F."/>
            <person name="Pereira de Jesus-Tran K."/>
            <person name="Cantin L."/>
            <person name="Luu-The V."/>
            <person name="Labrie F."/>
            <person name="Breton R."/>
        </authorList>
    </citation>
    <scope>X-RAY CRYSTALLOGRAPHY (1.35 ANGSTROMS) IN COMPLEX WITH NADP</scope>
    <scope>FUNCTION</scope>
    <scope>MUTAGENESIS OF ALA-24</scope>
</reference>
<reference key="7">
    <citation type="journal article" date="2007" name="Acta Crystallogr. F">
        <title>Structure of 3(17)alpha-hydroxysteroid dehydrogenase (AKR1C21) holoenzyme from an orthorhombic crystal form: an insight into the bifunctionality of the enzyme.</title>
        <authorList>
            <person name="Dhagat U."/>
            <person name="Carbone V."/>
            <person name="Chung R.P.-T."/>
            <person name="Schulze-Briese C."/>
            <person name="Endo S."/>
            <person name="Hara A."/>
            <person name="El-Kabbani O."/>
        </authorList>
    </citation>
    <scope>X-RAY CRYSTALLOGRAPHY (1.80 ANGSTROMS) IN COMPLEX WITH NADP</scope>
</reference>
<reference key="8">
    <citation type="journal article" date="2007" name="J. Mol. Biol.">
        <title>Mouse 17alpha-hydroxysteroid dehydrogenase (AKR1C21) binds steroids differently from other aldo-keto reductases: identification and characterization of amino acid residues critical for substrate binding.</title>
        <authorList>
            <person name="Faucher F."/>
            <person name="Cantin L."/>
            <person name="Pereira de Jesus-Tran K."/>
            <person name="Lemieux M."/>
            <person name="Luu-The V."/>
            <person name="Labrie F."/>
            <person name="Breton R."/>
        </authorList>
    </citation>
    <scope>X-RAY CRYSTALLOGRAPHY (1.85 ANGSTROMS) OF 6-323 IN COMPLEX WITH EPITESTOSTERONE</scope>
    <scope>MUTAGENESIS OF LYS-31</scope>
    <scope>BIOPHYSICOCHEMICAL PROPERTIES</scope>
    <scope>CATALYTIC ACTIVITY</scope>
    <scope>FUNCTION</scope>
</reference>
<reference key="9">
    <citation type="journal article" date="2009" name="Acta Crystallogr. D">
        <title>Structure of the G225P/G226P mutant of mouse 3(17)alpha-hydroxysteroid dehydrogenase (AKR1C21) ternary complex: implications for the binding of inhibitor and substrate.</title>
        <authorList>
            <person name="Dhagat U."/>
            <person name="Endo S."/>
            <person name="Mamiya H."/>
            <person name="Hara A."/>
            <person name="El-Kabbani O."/>
        </authorList>
    </citation>
    <scope>X-RAY CRYSTALLOGRAPHY (2.10 ANGSTROMS) IN COMPLEX WITH NADP</scope>
</reference>
<reference key="10">
    <citation type="journal article" date="2010" name="Acta Crystallogr. D">
        <title>Studies on a Tyr residue critical for the binding of coenzyme and substrate in mouse 3(17)alpha-hydroxysteroid dehydrogenase (AKR1C21): structure of the Y224D mutant enzyme.</title>
        <authorList>
            <person name="Dhagat U."/>
            <person name="Endo S."/>
            <person name="Mamiya H."/>
            <person name="Hara A."/>
            <person name="El-Kabbani O."/>
        </authorList>
    </citation>
    <scope>X-RAY CRYSTALLOGRAPHY (2.30 ANGSTROMS) OF MUTANT ASP-224</scope>
    <scope>CATALYTIC ACTIVITY</scope>
    <scope>FUNCTION</scope>
    <scope>MUTAGENESIS OF GLN-222 AND TYR-224</scope>
</reference>
<accession>Q91WR5</accession>
<accession>Q6P8V0</accession>
<accession>Q9CX32</accession>
<protein>
    <recommendedName>
        <fullName>Aldo-keto reductase family 1 member C21</fullName>
        <ecNumber>1.1.1.-</ecNumber>
    </recommendedName>
    <alternativeName>
        <fullName>17-alpha-hydroxysteroid dehydrogenase</fullName>
        <shortName>17-alpha-HSD</shortName>
    </alternativeName>
    <alternativeName>
        <fullName>3(or 17)-alpha-hydroxysteroid dehydrogenase</fullName>
        <ecNumber>1.1.1.209</ecNumber>
    </alternativeName>
    <alternativeName>
        <fullName>3-alpha-hydroxysteroid dehydrogenase</fullName>
    </alternativeName>
    <alternativeName>
        <fullName>Dihydrodiol dehydrogenase type 1</fullName>
        <shortName>DD1</shortName>
    </alternativeName>
    <alternativeName>
        <fullName>Dihydrodiol dehydrogenase type 3</fullName>
        <shortName>DD3</shortName>
    </alternativeName>
</protein>
<organism>
    <name type="scientific">Mus musculus</name>
    <name type="common">Mouse</name>
    <dbReference type="NCBI Taxonomy" id="10090"/>
    <lineage>
        <taxon>Eukaryota</taxon>
        <taxon>Metazoa</taxon>
        <taxon>Chordata</taxon>
        <taxon>Craniata</taxon>
        <taxon>Vertebrata</taxon>
        <taxon>Euteleostomi</taxon>
        <taxon>Mammalia</taxon>
        <taxon>Eutheria</taxon>
        <taxon>Euarchontoglires</taxon>
        <taxon>Glires</taxon>
        <taxon>Rodentia</taxon>
        <taxon>Myomorpha</taxon>
        <taxon>Muroidea</taxon>
        <taxon>Muridae</taxon>
        <taxon>Murinae</taxon>
        <taxon>Mus</taxon>
        <taxon>Mus</taxon>
    </lineage>
</organism>
<gene>
    <name type="primary">Akr1c21</name>
</gene>
<evidence type="ECO:0000250" key="1"/>
<evidence type="ECO:0000269" key="2">
    <source>
    </source>
</evidence>
<evidence type="ECO:0000269" key="3">
    <source>
    </source>
</evidence>
<evidence type="ECO:0000269" key="4">
    <source>
    </source>
</evidence>
<evidence type="ECO:0000269" key="5">
    <source>
    </source>
</evidence>
<evidence type="ECO:0000269" key="6">
    <source>
    </source>
</evidence>
<evidence type="ECO:0000269" key="7">
    <source>
    </source>
</evidence>
<evidence type="ECO:0000269" key="8">
    <source>
    </source>
</evidence>
<evidence type="ECO:0000305" key="9"/>
<evidence type="ECO:0007829" key="10">
    <source>
        <dbReference type="PDB" id="2HE5"/>
    </source>
</evidence>
<evidence type="ECO:0007829" key="11">
    <source>
        <dbReference type="PDB" id="2HEJ"/>
    </source>
</evidence>
<evidence type="ECO:0007829" key="12">
    <source>
        <dbReference type="PDB" id="2P5N"/>
    </source>
</evidence>
<evidence type="ECO:0007829" key="13">
    <source>
        <dbReference type="PDB" id="3CV6"/>
    </source>
</evidence>
<evidence type="ECO:0007829" key="14">
    <source>
        <dbReference type="PDB" id="3FJN"/>
    </source>
</evidence>
<proteinExistence type="evidence at protein level"/>
<name>AK1CL_MOUSE</name>
<dbReference type="EC" id="1.1.1.-"/>
<dbReference type="EC" id="1.1.1.209"/>
<dbReference type="EMBL" id="AB178898">
    <property type="protein sequence ID" value="BAD18929.1"/>
    <property type="molecule type" value="mRNA"/>
</dbReference>
<dbReference type="EMBL" id="AY742217">
    <property type="protein sequence ID" value="AAW65159.1"/>
    <property type="molecule type" value="mRNA"/>
</dbReference>
<dbReference type="EMBL" id="AK020439">
    <property type="protein sequence ID" value="BAB32101.1"/>
    <property type="molecule type" value="mRNA"/>
</dbReference>
<dbReference type="EMBL" id="BC013531">
    <property type="protein sequence ID" value="AAH13531.1"/>
    <property type="molecule type" value="mRNA"/>
</dbReference>
<dbReference type="EMBL" id="BC061057">
    <property type="protein sequence ID" value="AAH61057.1"/>
    <property type="molecule type" value="mRNA"/>
</dbReference>
<dbReference type="EMBL" id="BC091761">
    <property type="protein sequence ID" value="AAH91761.1"/>
    <property type="molecule type" value="mRNA"/>
</dbReference>
<dbReference type="CCDS" id="CCDS26225.1"/>
<dbReference type="RefSeq" id="NP_084177.2">
    <property type="nucleotide sequence ID" value="NM_029901.2"/>
</dbReference>
<dbReference type="PDB" id="2HE5">
    <property type="method" value="X-ray"/>
    <property type="resolution" value="2.90 A"/>
    <property type="chains" value="A/B/C/D=1-323"/>
</dbReference>
<dbReference type="PDB" id="2HE8">
    <property type="method" value="X-ray"/>
    <property type="resolution" value="1.90 A"/>
    <property type="chains" value="A/B=1-323"/>
</dbReference>
<dbReference type="PDB" id="2HEJ">
    <property type="method" value="X-ray"/>
    <property type="resolution" value="1.35 A"/>
    <property type="chains" value="A/B=1-323"/>
</dbReference>
<dbReference type="PDB" id="2IPF">
    <property type="method" value="X-ray"/>
    <property type="resolution" value="1.85 A"/>
    <property type="chains" value="A/B=6-323"/>
</dbReference>
<dbReference type="PDB" id="2IPG">
    <property type="method" value="X-ray"/>
    <property type="resolution" value="1.90 A"/>
    <property type="chains" value="A/B=5-323"/>
</dbReference>
<dbReference type="PDB" id="2P5N">
    <property type="method" value="X-ray"/>
    <property type="resolution" value="1.80 A"/>
    <property type="chains" value="A/B=1-323"/>
</dbReference>
<dbReference type="PDB" id="3CV6">
    <property type="method" value="X-ray"/>
    <property type="resolution" value="2.10 A"/>
    <property type="chains" value="A/B=1-323"/>
</dbReference>
<dbReference type="PDB" id="3FJN">
    <property type="method" value="X-ray"/>
    <property type="resolution" value="2.30 A"/>
    <property type="chains" value="A/B=1-323"/>
</dbReference>
<dbReference type="PDBsum" id="2HE5"/>
<dbReference type="PDBsum" id="2HE8"/>
<dbReference type="PDBsum" id="2HEJ"/>
<dbReference type="PDBsum" id="2IPF"/>
<dbReference type="PDBsum" id="2IPG"/>
<dbReference type="PDBsum" id="2P5N"/>
<dbReference type="PDBsum" id="3CV6"/>
<dbReference type="PDBsum" id="3FJN"/>
<dbReference type="SMR" id="Q91WR5"/>
<dbReference type="FunCoup" id="Q91WR5">
    <property type="interactions" value="205"/>
</dbReference>
<dbReference type="STRING" id="10090.ENSMUSP00000021628"/>
<dbReference type="BindingDB" id="Q91WR5"/>
<dbReference type="ChEMBL" id="CHEMBL1075270"/>
<dbReference type="DrugCentral" id="Q91WR5"/>
<dbReference type="iPTMnet" id="Q91WR5"/>
<dbReference type="PhosphoSitePlus" id="Q91WR5"/>
<dbReference type="jPOST" id="Q91WR5"/>
<dbReference type="PaxDb" id="10090-ENSMUSP00000021628"/>
<dbReference type="PeptideAtlas" id="Q91WR5"/>
<dbReference type="ProteomicsDB" id="296382"/>
<dbReference type="Pumba" id="Q91WR5"/>
<dbReference type="DNASU" id="77337"/>
<dbReference type="Ensembl" id="ENSMUST00000021628.4">
    <property type="protein sequence ID" value="ENSMUSP00000021628.4"/>
    <property type="gene ID" value="ENSMUSG00000021207.10"/>
</dbReference>
<dbReference type="GeneID" id="77337"/>
<dbReference type="KEGG" id="mmu:77337"/>
<dbReference type="UCSC" id="uc007pjr.1">
    <property type="organism name" value="mouse"/>
</dbReference>
<dbReference type="AGR" id="MGI:1924587"/>
<dbReference type="CTD" id="77337"/>
<dbReference type="MGI" id="MGI:1924587">
    <property type="gene designation" value="Akr1c21"/>
</dbReference>
<dbReference type="VEuPathDB" id="HostDB:ENSMUSG00000021207"/>
<dbReference type="eggNOG" id="KOG1577">
    <property type="taxonomic scope" value="Eukaryota"/>
</dbReference>
<dbReference type="GeneTree" id="ENSGT00940000153677"/>
<dbReference type="HOGENOM" id="CLU_023205_0_0_1"/>
<dbReference type="InParanoid" id="Q91WR5"/>
<dbReference type="OMA" id="IRYCDFQ"/>
<dbReference type="OrthoDB" id="416253at2759"/>
<dbReference type="PhylomeDB" id="Q91WR5"/>
<dbReference type="TreeFam" id="TF106492"/>
<dbReference type="BRENDA" id="1.1.1.148">
    <property type="organism ID" value="3474"/>
</dbReference>
<dbReference type="BRENDA" id="1.1.1.209">
    <property type="organism ID" value="3474"/>
</dbReference>
<dbReference type="BRENDA" id="1.1.1.50">
    <property type="organism ID" value="3474"/>
</dbReference>
<dbReference type="Reactome" id="R-MMU-193368">
    <property type="pathway name" value="Synthesis of bile acids and bile salts via 7alpha-hydroxycholesterol"/>
</dbReference>
<dbReference type="Reactome" id="R-MMU-193775">
    <property type="pathway name" value="Synthesis of bile acids and bile salts via 24-hydroxycholesterol"/>
</dbReference>
<dbReference type="Reactome" id="R-MMU-193807">
    <property type="pathway name" value="Synthesis of bile acids and bile salts via 27-hydroxycholesterol"/>
</dbReference>
<dbReference type="Reactome" id="R-MMU-2162123">
    <property type="pathway name" value="Synthesis of Prostaglandins (PG) and Thromboxanes (TX)"/>
</dbReference>
<dbReference type="Reactome" id="R-MMU-5365859">
    <property type="pathway name" value="RA biosynthesis pathway"/>
</dbReference>
<dbReference type="Reactome" id="R-MMU-975634">
    <property type="pathway name" value="Retinoid metabolism and transport"/>
</dbReference>
<dbReference type="Reactome" id="R-MMU-9757110">
    <property type="pathway name" value="Prednisone ADME"/>
</dbReference>
<dbReference type="SABIO-RK" id="Q91WR5"/>
<dbReference type="BioGRID-ORCS" id="77337">
    <property type="hits" value="1 hit in 78 CRISPR screens"/>
</dbReference>
<dbReference type="EvolutionaryTrace" id="Q91WR5"/>
<dbReference type="PRO" id="PR:Q91WR5"/>
<dbReference type="Proteomes" id="UP000000589">
    <property type="component" value="Chromosome 13"/>
</dbReference>
<dbReference type="RNAct" id="Q91WR5">
    <property type="molecule type" value="protein"/>
</dbReference>
<dbReference type="Bgee" id="ENSMUSG00000021207">
    <property type="expression patterns" value="Expressed in right kidney and 41 other cell types or tissues"/>
</dbReference>
<dbReference type="ExpressionAtlas" id="Q91WR5">
    <property type="expression patterns" value="baseline and differential"/>
</dbReference>
<dbReference type="GO" id="GO:0005737">
    <property type="term" value="C:cytoplasm"/>
    <property type="evidence" value="ECO:0007669"/>
    <property type="project" value="UniProtKB-SubCell"/>
</dbReference>
<dbReference type="GO" id="GO:0072582">
    <property type="term" value="F:17-beta-hydroxysteroid dehydrogenase (NADP+) activity"/>
    <property type="evidence" value="ECO:0000315"/>
    <property type="project" value="CAFA"/>
</dbReference>
<dbReference type="GO" id="GO:0047024">
    <property type="term" value="F:5-alpha-androstane-3-beta,17-beta-diol dehydrogenase (NADP+) activity"/>
    <property type="evidence" value="ECO:0000315"/>
    <property type="project" value="CAFA"/>
</dbReference>
<dbReference type="GO" id="GO:0004033">
    <property type="term" value="F:aldo-keto reductase (NADPH) activity"/>
    <property type="evidence" value="ECO:0000247"/>
    <property type="project" value="MGI"/>
</dbReference>
<dbReference type="GO" id="GO:0047023">
    <property type="term" value="F:androsterone dehydrogenase [NAD(P)+] activity"/>
    <property type="evidence" value="ECO:0000314"/>
    <property type="project" value="UniProtKB"/>
</dbReference>
<dbReference type="GO" id="GO:1902121">
    <property type="term" value="F:lithocholic acid binding"/>
    <property type="evidence" value="ECO:0000315"/>
    <property type="project" value="CAFA"/>
</dbReference>
<dbReference type="GO" id="GO:0070401">
    <property type="term" value="F:NADP+ binding"/>
    <property type="evidence" value="ECO:0000315"/>
    <property type="project" value="CAFA"/>
</dbReference>
<dbReference type="GO" id="GO:0070402">
    <property type="term" value="F:NADPH binding"/>
    <property type="evidence" value="ECO:0000315"/>
    <property type="project" value="CAFA"/>
</dbReference>
<dbReference type="GO" id="GO:0005496">
    <property type="term" value="F:steroid binding"/>
    <property type="evidence" value="ECO:0000315"/>
    <property type="project" value="CAFA"/>
</dbReference>
<dbReference type="GO" id="GO:0033764">
    <property type="term" value="F:steroid dehydrogenase activity, acting on the CH-OH group of donors, NAD or NADP as acceptor"/>
    <property type="evidence" value="ECO:0000314"/>
    <property type="project" value="MGI"/>
</dbReference>
<dbReference type="GO" id="GO:0006694">
    <property type="term" value="P:steroid biosynthetic process"/>
    <property type="evidence" value="ECO:0000247"/>
    <property type="project" value="MGI"/>
</dbReference>
<dbReference type="GO" id="GO:0008202">
    <property type="term" value="P:steroid metabolic process"/>
    <property type="evidence" value="ECO:0000315"/>
    <property type="project" value="CAFA"/>
</dbReference>
<dbReference type="CDD" id="cd19108">
    <property type="entry name" value="AKR_AKR1C1-35"/>
    <property type="match status" value="1"/>
</dbReference>
<dbReference type="FunFam" id="3.20.20.100:FF:000003">
    <property type="entry name" value="Aldo-keto reductase family 1 member C3"/>
    <property type="match status" value="1"/>
</dbReference>
<dbReference type="Gene3D" id="3.20.20.100">
    <property type="entry name" value="NADP-dependent oxidoreductase domain"/>
    <property type="match status" value="1"/>
</dbReference>
<dbReference type="InterPro" id="IPR020471">
    <property type="entry name" value="AKR"/>
</dbReference>
<dbReference type="InterPro" id="IPR044482">
    <property type="entry name" value="AKR1C"/>
</dbReference>
<dbReference type="InterPro" id="IPR018170">
    <property type="entry name" value="Aldo/ket_reductase_CS"/>
</dbReference>
<dbReference type="InterPro" id="IPR023210">
    <property type="entry name" value="NADP_OxRdtase_dom"/>
</dbReference>
<dbReference type="InterPro" id="IPR036812">
    <property type="entry name" value="NADP_OxRdtase_dom_sf"/>
</dbReference>
<dbReference type="PANTHER" id="PTHR11732">
    <property type="entry name" value="ALDO/KETO REDUCTASE"/>
    <property type="match status" value="1"/>
</dbReference>
<dbReference type="Pfam" id="PF00248">
    <property type="entry name" value="Aldo_ket_red"/>
    <property type="match status" value="1"/>
</dbReference>
<dbReference type="PIRSF" id="PIRSF000097">
    <property type="entry name" value="AKR"/>
    <property type="match status" value="1"/>
</dbReference>
<dbReference type="PRINTS" id="PR00069">
    <property type="entry name" value="ALDKETRDTASE"/>
</dbReference>
<dbReference type="SUPFAM" id="SSF51430">
    <property type="entry name" value="NAD(P)-linked oxidoreductase"/>
    <property type="match status" value="1"/>
</dbReference>
<dbReference type="PROSITE" id="PS00062">
    <property type="entry name" value="ALDOKETO_REDUCTASE_2"/>
    <property type="match status" value="1"/>
</dbReference>
<keyword id="KW-0002">3D-structure</keyword>
<keyword id="KW-0963">Cytoplasm</keyword>
<keyword id="KW-0443">Lipid metabolism</keyword>
<keyword id="KW-0521">NADP</keyword>
<keyword id="KW-0560">Oxidoreductase</keyword>
<keyword id="KW-1185">Reference proteome</keyword>
<keyword id="KW-0753">Steroid metabolism</keyword>
<sequence length="323" mass="36877">MNSKCHCVILNDGNFIPVLGFGTALPLECPKSKAKELTKIAIDAGFHHFDSASVYNTEDHVGEAIRSKIADGTVRREDIFYTSKVWCTSLHPELVRASLERSLQKLQFDYVDLYLIHYPMALKPGEENFPVDEHGKLIFDRVDLCATWEAMEKCKDAGLTKSIGVSNFNYRQLEMILNKPGLKYKPVCNQVECHPYLNQMKLLDFCKSKDIVLVAYGVLGTQRYGGWVDQNSPVLLDEPVLGSMAKKYNRTPALIALRYQLQRGIVVLNTSLKEERIKENMQVFEFQLSSEDMKVLDGLNRNMRYIPAAIFKGHPNWPFLDEY</sequence>